<comment type="similarity">
    <text evidence="2">Belongs to the cyclin family. Cyclin Y subfamily.</text>
</comment>
<organism>
    <name type="scientific">Xenopus laevis</name>
    <name type="common">African clawed frog</name>
    <dbReference type="NCBI Taxonomy" id="8355"/>
    <lineage>
        <taxon>Eukaryota</taxon>
        <taxon>Metazoa</taxon>
        <taxon>Chordata</taxon>
        <taxon>Craniata</taxon>
        <taxon>Vertebrata</taxon>
        <taxon>Euteleostomi</taxon>
        <taxon>Amphibia</taxon>
        <taxon>Batrachia</taxon>
        <taxon>Anura</taxon>
        <taxon>Pipoidea</taxon>
        <taxon>Pipidae</taxon>
        <taxon>Xenopodinae</taxon>
        <taxon>Xenopus</taxon>
        <taxon>Xenopus</taxon>
    </lineage>
</organism>
<feature type="chain" id="PRO_0000309323" description="Cyclin-Y-like protein 1-A">
    <location>
        <begin position="1"/>
        <end position="339"/>
    </location>
</feature>
<feature type="domain" description="Cyclin N-terminal">
    <location>
        <begin position="141"/>
        <end position="263"/>
    </location>
</feature>
<feature type="region of interest" description="Disordered" evidence="1">
    <location>
        <begin position="1"/>
        <end position="42"/>
    </location>
</feature>
<feature type="compositionally biased region" description="Polar residues" evidence="1">
    <location>
        <begin position="1"/>
        <end position="13"/>
    </location>
</feature>
<feature type="compositionally biased region" description="Basic and acidic residues" evidence="1">
    <location>
        <begin position="14"/>
        <end position="24"/>
    </location>
</feature>
<name>CCY1A_XENLA</name>
<reference key="1">
    <citation type="submission" date="2004-10" db="EMBL/GenBank/DDBJ databases">
        <authorList>
            <consortium name="NIH - Xenopus Gene Collection (XGC) project"/>
        </authorList>
    </citation>
    <scope>NUCLEOTIDE SEQUENCE [LARGE SCALE MRNA]</scope>
    <source>
        <tissue>Embryo</tissue>
    </source>
</reference>
<protein>
    <recommendedName>
        <fullName>Cyclin-Y-like protein 1-A</fullName>
    </recommendedName>
</protein>
<accession>Q5U5D0</accession>
<evidence type="ECO:0000256" key="1">
    <source>
        <dbReference type="SAM" id="MobiDB-lite"/>
    </source>
</evidence>
<evidence type="ECO:0000305" key="2"/>
<keyword id="KW-0195">Cyclin</keyword>
<keyword id="KW-1185">Reference proteome</keyword>
<dbReference type="EMBL" id="BC084754">
    <property type="protein sequence ID" value="AAH84754.1"/>
    <property type="molecule type" value="mRNA"/>
</dbReference>
<dbReference type="RefSeq" id="NP_001088434.1">
    <property type="nucleotide sequence ID" value="NM_001094965.1"/>
</dbReference>
<dbReference type="SMR" id="Q5U5D0"/>
<dbReference type="DNASU" id="495298"/>
<dbReference type="GeneID" id="495298"/>
<dbReference type="KEGG" id="xla:495298"/>
<dbReference type="AGR" id="Xenbase:XB-GENE-6254094"/>
<dbReference type="CTD" id="495298"/>
<dbReference type="Xenbase" id="XB-GENE-6254094">
    <property type="gene designation" value="ccnyl1.S"/>
</dbReference>
<dbReference type="OMA" id="KALYDCA"/>
<dbReference type="OrthoDB" id="10250320at2759"/>
<dbReference type="Proteomes" id="UP000186698">
    <property type="component" value="Chromosome 9_10S"/>
</dbReference>
<dbReference type="Bgee" id="495298">
    <property type="expression patterns" value="Expressed in blastula and 19 other cell types or tissues"/>
</dbReference>
<dbReference type="GO" id="GO:0005886">
    <property type="term" value="C:plasma membrane"/>
    <property type="evidence" value="ECO:0000318"/>
    <property type="project" value="GO_Central"/>
</dbReference>
<dbReference type="GO" id="GO:0019901">
    <property type="term" value="F:protein kinase binding"/>
    <property type="evidence" value="ECO:0007669"/>
    <property type="project" value="InterPro"/>
</dbReference>
<dbReference type="GO" id="GO:0060828">
    <property type="term" value="P:regulation of canonical Wnt signaling pathway"/>
    <property type="evidence" value="ECO:0000318"/>
    <property type="project" value="GO_Central"/>
</dbReference>
<dbReference type="CDD" id="cd20540">
    <property type="entry name" value="CYCLIN_CCNY_like"/>
    <property type="match status" value="1"/>
</dbReference>
<dbReference type="FunFam" id="1.10.472.10:FF:000011">
    <property type="entry name" value="Cyclin-Y isoform 1"/>
    <property type="match status" value="1"/>
</dbReference>
<dbReference type="Gene3D" id="1.10.472.10">
    <property type="entry name" value="Cyclin-like"/>
    <property type="match status" value="1"/>
</dbReference>
<dbReference type="InterPro" id="IPR013763">
    <property type="entry name" value="Cyclin-like_dom"/>
</dbReference>
<dbReference type="InterPro" id="IPR036915">
    <property type="entry name" value="Cyclin-like_sf"/>
</dbReference>
<dbReference type="InterPro" id="IPR006671">
    <property type="entry name" value="Cyclin_N"/>
</dbReference>
<dbReference type="InterPro" id="IPR012399">
    <property type="entry name" value="Cyclin_Y"/>
</dbReference>
<dbReference type="PANTHER" id="PTHR14248">
    <property type="entry name" value="CYCLIN Y, ISOFORM A"/>
    <property type="match status" value="1"/>
</dbReference>
<dbReference type="Pfam" id="PF00134">
    <property type="entry name" value="Cyclin_N"/>
    <property type="match status" value="1"/>
</dbReference>
<dbReference type="PIRSF" id="PIRSF028934">
    <property type="entry name" value="Cyclin_CG14939"/>
    <property type="match status" value="1"/>
</dbReference>
<dbReference type="SMART" id="SM00385">
    <property type="entry name" value="CYCLIN"/>
    <property type="match status" value="1"/>
</dbReference>
<dbReference type="SUPFAM" id="SSF47954">
    <property type="entry name" value="Cyclin-like"/>
    <property type="match status" value="1"/>
</dbReference>
<sequence>MGNTVTCCVSPDSSPKEGRDREVTESGEPYQAQGEPQDGDVQHMSVWELPIDLSNERNPSDDAQTSTIFLCKSQTDVREKRKSNHINHISPGQLTKKYSSCSTIFLDDSTVSQPNLRSTIKCVTLAIYYHIKNRDSDRSLDIFDEKLHPITREEVAHDYCKHDPDHKHIYRFVRTLFSAAQLTAECAIVTLVYLERLLTYAEIDICPSNWKQIVLGAILLSSKVWDDQAVWNVDYCQIMKDITVEDMNEMERHFLELLQFNINVTASVYAKYYFDLRSLADDNNLHFLLEPLSNERAQKLEAISRLCEDKYKDLSKAAMRRSISADNLVGIRRSNAIIS</sequence>
<gene>
    <name type="primary">ccnyl1-a</name>
</gene>
<proteinExistence type="evidence at transcript level"/>